<accession>Q054X8</accession>
<evidence type="ECO:0000255" key="1">
    <source>
        <dbReference type="HAMAP-Rule" id="MF_01334"/>
    </source>
</evidence>
<evidence type="ECO:0000256" key="2">
    <source>
        <dbReference type="SAM" id="MobiDB-lite"/>
    </source>
</evidence>
<evidence type="ECO:0000305" key="3"/>
<dbReference type="EMBL" id="CP000348">
    <property type="protein sequence ID" value="ABJ78117.1"/>
    <property type="molecule type" value="Genomic_DNA"/>
</dbReference>
<dbReference type="RefSeq" id="WP_011669481.1">
    <property type="nucleotide sequence ID" value="NC_008508.1"/>
</dbReference>
<dbReference type="SMR" id="Q054X8"/>
<dbReference type="KEGG" id="lbl:LBL_0524"/>
<dbReference type="HOGENOM" id="CLU_075939_2_1_12"/>
<dbReference type="GO" id="GO:0022625">
    <property type="term" value="C:cytosolic large ribosomal subunit"/>
    <property type="evidence" value="ECO:0007669"/>
    <property type="project" value="TreeGrafter"/>
</dbReference>
<dbReference type="GO" id="GO:0008097">
    <property type="term" value="F:5S rRNA binding"/>
    <property type="evidence" value="ECO:0007669"/>
    <property type="project" value="InterPro"/>
</dbReference>
<dbReference type="GO" id="GO:0003735">
    <property type="term" value="F:structural constituent of ribosome"/>
    <property type="evidence" value="ECO:0007669"/>
    <property type="project" value="InterPro"/>
</dbReference>
<dbReference type="GO" id="GO:0006412">
    <property type="term" value="P:translation"/>
    <property type="evidence" value="ECO:0007669"/>
    <property type="project" value="UniProtKB-UniRule"/>
</dbReference>
<dbReference type="CDD" id="cd00495">
    <property type="entry name" value="Ribosomal_L25_TL5_CTC"/>
    <property type="match status" value="1"/>
</dbReference>
<dbReference type="Gene3D" id="2.170.120.20">
    <property type="entry name" value="Ribosomal protein L25, beta domain"/>
    <property type="match status" value="1"/>
</dbReference>
<dbReference type="Gene3D" id="2.40.240.10">
    <property type="entry name" value="Ribosomal Protein L25, Chain P"/>
    <property type="match status" value="1"/>
</dbReference>
<dbReference type="HAMAP" id="MF_01334">
    <property type="entry name" value="Ribosomal_bL25_CTC"/>
    <property type="match status" value="1"/>
</dbReference>
<dbReference type="InterPro" id="IPR020056">
    <property type="entry name" value="Rbsml_bL25/Gln-tRNA_synth_N"/>
</dbReference>
<dbReference type="InterPro" id="IPR011035">
    <property type="entry name" value="Ribosomal_bL25/Gln-tRNA_synth"/>
</dbReference>
<dbReference type="InterPro" id="IPR020057">
    <property type="entry name" value="Ribosomal_bL25_b-dom"/>
</dbReference>
<dbReference type="InterPro" id="IPR037121">
    <property type="entry name" value="Ribosomal_bL25_C"/>
</dbReference>
<dbReference type="InterPro" id="IPR001021">
    <property type="entry name" value="Ribosomal_bL25_long"/>
</dbReference>
<dbReference type="InterPro" id="IPR029751">
    <property type="entry name" value="Ribosomal_L25_dom"/>
</dbReference>
<dbReference type="InterPro" id="IPR020930">
    <property type="entry name" value="Ribosomal_uL5_bac-type"/>
</dbReference>
<dbReference type="NCBIfam" id="TIGR00731">
    <property type="entry name" value="bL25_bact_ctc"/>
    <property type="match status" value="1"/>
</dbReference>
<dbReference type="NCBIfam" id="NF004136">
    <property type="entry name" value="PRK05618.3-2"/>
    <property type="match status" value="1"/>
</dbReference>
<dbReference type="PANTHER" id="PTHR33284">
    <property type="entry name" value="RIBOSOMAL PROTEIN L25/GLN-TRNA SYNTHETASE, ANTI-CODON-BINDING DOMAIN-CONTAINING PROTEIN"/>
    <property type="match status" value="1"/>
</dbReference>
<dbReference type="PANTHER" id="PTHR33284:SF1">
    <property type="entry name" value="RIBOSOMAL PROTEIN L25_GLN-TRNA SYNTHETASE, ANTI-CODON-BINDING DOMAIN-CONTAINING PROTEIN"/>
    <property type="match status" value="1"/>
</dbReference>
<dbReference type="Pfam" id="PF01386">
    <property type="entry name" value="Ribosomal_L25p"/>
    <property type="match status" value="1"/>
</dbReference>
<dbReference type="Pfam" id="PF14693">
    <property type="entry name" value="Ribosomal_TL5_C"/>
    <property type="match status" value="1"/>
</dbReference>
<dbReference type="SUPFAM" id="SSF50715">
    <property type="entry name" value="Ribosomal protein L25-like"/>
    <property type="match status" value="1"/>
</dbReference>
<feature type="chain" id="PRO_1000052900" description="Large ribosomal subunit protein bL25">
    <location>
        <begin position="1"/>
        <end position="212"/>
    </location>
</feature>
<feature type="region of interest" description="Disordered" evidence="2">
    <location>
        <begin position="1"/>
        <end position="25"/>
    </location>
</feature>
<feature type="compositionally biased region" description="Basic and acidic residues" evidence="2">
    <location>
        <begin position="13"/>
        <end position="24"/>
    </location>
</feature>
<protein>
    <recommendedName>
        <fullName evidence="1">Large ribosomal subunit protein bL25</fullName>
    </recommendedName>
    <alternativeName>
        <fullName evidence="3">50S ribosomal protein L25</fullName>
    </alternativeName>
    <alternativeName>
        <fullName evidence="1">General stress protein CTC</fullName>
    </alternativeName>
</protein>
<proteinExistence type="inferred from homology"/>
<organism>
    <name type="scientific">Leptospira borgpetersenii serovar Hardjo-bovis (strain L550)</name>
    <dbReference type="NCBI Taxonomy" id="355276"/>
    <lineage>
        <taxon>Bacteria</taxon>
        <taxon>Pseudomonadati</taxon>
        <taxon>Spirochaetota</taxon>
        <taxon>Spirochaetia</taxon>
        <taxon>Leptospirales</taxon>
        <taxon>Leptospiraceae</taxon>
        <taxon>Leptospira</taxon>
    </lineage>
</organism>
<keyword id="KW-0687">Ribonucleoprotein</keyword>
<keyword id="KW-0689">Ribosomal protein</keyword>
<keyword id="KW-0694">RNA-binding</keyword>
<keyword id="KW-0699">rRNA-binding</keyword>
<reference key="1">
    <citation type="journal article" date="2006" name="Proc. Natl. Acad. Sci. U.S.A.">
        <title>Genome reduction in Leptospira borgpetersenii reflects limited transmission potential.</title>
        <authorList>
            <person name="Bulach D.M."/>
            <person name="Zuerner R.L."/>
            <person name="Wilson P."/>
            <person name="Seemann T."/>
            <person name="McGrath A."/>
            <person name="Cullen P.A."/>
            <person name="Davis J."/>
            <person name="Johnson M."/>
            <person name="Kuczek E."/>
            <person name="Alt D.P."/>
            <person name="Peterson-Burch B."/>
            <person name="Coppel R.L."/>
            <person name="Rood J.I."/>
            <person name="Davies J.K."/>
            <person name="Adler B."/>
        </authorList>
    </citation>
    <scope>NUCLEOTIDE SEQUENCE [LARGE SCALE GENOMIC DNA]</scope>
    <source>
        <strain>L550</strain>
    </source>
</reference>
<name>RL25_LEPBL</name>
<gene>
    <name evidence="1" type="primary">rplY</name>
    <name evidence="1" type="synonym">ctc</name>
    <name type="ordered locus">LBL_0524</name>
</gene>
<comment type="function">
    <text evidence="1">This is one of the proteins that binds to the 5S RNA in the ribosome where it forms part of the central protuberance.</text>
</comment>
<comment type="subunit">
    <text evidence="1">Part of the 50S ribosomal subunit; part of the 5S rRNA/L5/L18/L25 subcomplex. Contacts the 5S rRNA. Binds to the 5S rRNA independently of L5 and L18.</text>
</comment>
<comment type="similarity">
    <text evidence="1">Belongs to the bacterial ribosomal protein bL25 family. CTC subfamily.</text>
</comment>
<sequence length="212" mass="23092">MSQSTIHKIAVKKRTETGKNENNRLRSSGMIPVNIIGAGVATSGAVNEKELAKMVHSGIRQSTLIELDVEGQGQQKVFVKEIQRFPEIDRIRHVDFYKVVPGQKIVTKIGIETTGVAKGSKTGGQFEHIIHEIRVKTIPEDLLENLTIDVTDLDVGDSIKISQLKVPASWEILINGDPIVTSVNKTKALLAAERAEAKGAVPDDAKAKKGKK</sequence>